<organism>
    <name type="scientific">Enterobacter sp. (strain 638)</name>
    <dbReference type="NCBI Taxonomy" id="399742"/>
    <lineage>
        <taxon>Bacteria</taxon>
        <taxon>Pseudomonadati</taxon>
        <taxon>Pseudomonadota</taxon>
        <taxon>Gammaproteobacteria</taxon>
        <taxon>Enterobacterales</taxon>
        <taxon>Enterobacteriaceae</taxon>
        <taxon>Enterobacter</taxon>
    </lineage>
</organism>
<evidence type="ECO:0000255" key="1">
    <source>
        <dbReference type="HAMAP-Rule" id="MF_01063"/>
    </source>
</evidence>
<gene>
    <name evidence="1" type="primary">frsA</name>
    <name type="ordered locus">Ent638_0765</name>
</gene>
<proteinExistence type="inferred from homology"/>
<sequence>MTQANLSETLFKPRFKHPETSTLVRRFNPGTQPAVQSTLDGKTVPHWYRMINRLMWIWRGIDAREILEVQARIVMSEADRTDSELYDTVVGYRGGNWIYEWATQAMVWQQKATQEPDQTLSGQHWLHAANLYSIAAYPHLKGDDLAEQAQALANRAYEEAAQRLPCNMREIEFPIPGGASVTGFLHMPPGEGPFPTVLMCGGLDSLQIDYYSLFERYFAPKGIAMLTLDMPSIGFSSKWKLTQDSSLLHQHALKALENIPWVDHTRVAAFGFRFGANVAVRLAYLESSRLKAVACLGPVVHALLSDPQRQASVPEMYLDVLASRLGMHDASDEALRVELNRYSLKTQGLLGRRCPTPMMSGFWKNDPFSPEEESRLITSSSLDGKLLEIPFSPVYQNFDKGLKEITRWITQRLC</sequence>
<reference key="1">
    <citation type="journal article" date="2010" name="PLoS Genet.">
        <title>Genome sequence of the plant growth promoting endophytic bacterium Enterobacter sp. 638.</title>
        <authorList>
            <person name="Taghavi S."/>
            <person name="van der Lelie D."/>
            <person name="Hoffman A."/>
            <person name="Zhang Y.B."/>
            <person name="Walla M.D."/>
            <person name="Vangronsveld J."/>
            <person name="Newman L."/>
            <person name="Monchy S."/>
        </authorList>
    </citation>
    <scope>NUCLEOTIDE SEQUENCE [LARGE SCALE GENOMIC DNA]</scope>
    <source>
        <strain>638</strain>
    </source>
</reference>
<keyword id="KW-0378">Hydrolase</keyword>
<keyword id="KW-0719">Serine esterase</keyword>
<protein>
    <recommendedName>
        <fullName evidence="1">Esterase FrsA</fullName>
        <ecNumber evidence="1">3.1.1.1</ecNumber>
    </recommendedName>
</protein>
<accession>A4W6X1</accession>
<name>FRSA_ENT38</name>
<comment type="function">
    <text evidence="1">Catalyzes the hydrolysis of esters.</text>
</comment>
<comment type="catalytic activity">
    <reaction evidence="1">
        <text>a carboxylic ester + H2O = an alcohol + a carboxylate + H(+)</text>
        <dbReference type="Rhea" id="RHEA:21164"/>
        <dbReference type="ChEBI" id="CHEBI:15377"/>
        <dbReference type="ChEBI" id="CHEBI:15378"/>
        <dbReference type="ChEBI" id="CHEBI:29067"/>
        <dbReference type="ChEBI" id="CHEBI:30879"/>
        <dbReference type="ChEBI" id="CHEBI:33308"/>
        <dbReference type="EC" id="3.1.1.1"/>
    </reaction>
</comment>
<comment type="similarity">
    <text evidence="1">Belongs to the FrsA family.</text>
</comment>
<feature type="chain" id="PRO_1000064482" description="Esterase FrsA">
    <location>
        <begin position="1"/>
        <end position="414"/>
    </location>
</feature>
<dbReference type="EC" id="3.1.1.1" evidence="1"/>
<dbReference type="EMBL" id="CP000653">
    <property type="protein sequence ID" value="ABP59451.1"/>
    <property type="molecule type" value="Genomic_DNA"/>
</dbReference>
<dbReference type="RefSeq" id="WP_012016172.1">
    <property type="nucleotide sequence ID" value="NC_009436.1"/>
</dbReference>
<dbReference type="SMR" id="A4W6X1"/>
<dbReference type="STRING" id="399742.Ent638_0765"/>
<dbReference type="ESTHER" id="ent38-y765">
    <property type="family name" value="Duf_1100-R"/>
</dbReference>
<dbReference type="KEGG" id="ent:Ent638_0765"/>
<dbReference type="eggNOG" id="COG1073">
    <property type="taxonomic scope" value="Bacteria"/>
</dbReference>
<dbReference type="HOGENOM" id="CLU_036819_0_0_6"/>
<dbReference type="OrthoDB" id="5590073at2"/>
<dbReference type="Proteomes" id="UP000000230">
    <property type="component" value="Chromosome"/>
</dbReference>
<dbReference type="GO" id="GO:0106435">
    <property type="term" value="F:carboxylesterase activity"/>
    <property type="evidence" value="ECO:0007669"/>
    <property type="project" value="UniProtKB-EC"/>
</dbReference>
<dbReference type="FunFam" id="3.40.50.1820:FF:000022">
    <property type="entry name" value="Esterase FrsA"/>
    <property type="match status" value="1"/>
</dbReference>
<dbReference type="Gene3D" id="3.40.50.1820">
    <property type="entry name" value="alpha/beta hydrolase"/>
    <property type="match status" value="1"/>
</dbReference>
<dbReference type="HAMAP" id="MF_01063">
    <property type="entry name" value="FrsA"/>
    <property type="match status" value="1"/>
</dbReference>
<dbReference type="InterPro" id="IPR029058">
    <property type="entry name" value="AB_hydrolase_fold"/>
</dbReference>
<dbReference type="InterPro" id="IPR043423">
    <property type="entry name" value="FrsA"/>
</dbReference>
<dbReference type="InterPro" id="IPR010520">
    <property type="entry name" value="FrsA-like"/>
</dbReference>
<dbReference type="InterPro" id="IPR050261">
    <property type="entry name" value="FrsA_esterase"/>
</dbReference>
<dbReference type="NCBIfam" id="NF003460">
    <property type="entry name" value="PRK05077.1"/>
    <property type="match status" value="1"/>
</dbReference>
<dbReference type="PANTHER" id="PTHR22946">
    <property type="entry name" value="DIENELACTONE HYDROLASE DOMAIN-CONTAINING PROTEIN-RELATED"/>
    <property type="match status" value="1"/>
</dbReference>
<dbReference type="PANTHER" id="PTHR22946:SF4">
    <property type="entry name" value="ESTERASE FRSA"/>
    <property type="match status" value="1"/>
</dbReference>
<dbReference type="Pfam" id="PF06500">
    <property type="entry name" value="FrsA-like"/>
    <property type="match status" value="1"/>
</dbReference>
<dbReference type="SUPFAM" id="SSF53474">
    <property type="entry name" value="alpha/beta-Hydrolases"/>
    <property type="match status" value="1"/>
</dbReference>